<dbReference type="EMBL" id="CU329670">
    <property type="protein sequence ID" value="CAC34961.1"/>
    <property type="molecule type" value="Genomic_DNA"/>
</dbReference>
<dbReference type="RefSeq" id="NP_593195.1">
    <property type="nucleotide sequence ID" value="NM_001018591.2"/>
</dbReference>
<dbReference type="PaxDb" id="4896-SPAC1A6.11.1"/>
<dbReference type="EnsemblFungi" id="SPAC1A6.11.1">
    <property type="protein sequence ID" value="SPAC1A6.11.1:pep"/>
    <property type="gene ID" value="SPAC1A6.11"/>
</dbReference>
<dbReference type="KEGG" id="spo:2542238"/>
<dbReference type="PomBase" id="SPAC1A6.11"/>
<dbReference type="VEuPathDB" id="FungiDB:SPAC1A6.11"/>
<dbReference type="HOGENOM" id="CLU_2224742_0_0_1"/>
<dbReference type="InParanoid" id="Q9C114"/>
<dbReference type="PRO" id="PR:Q9C114"/>
<dbReference type="Proteomes" id="UP000002485">
    <property type="component" value="Chromosome I"/>
</dbReference>
<sequence>MNHNVYLLTSFNLWSHGVYKISSISLSNSFFPHSFMFVKSLHLMTSQHIFKCLSSCNYALSILHNICLASFLYLSKCYYHTHILTSVRLDFCKSHAHTYIKSKAST</sequence>
<name>YEXB_SCHPO</name>
<feature type="chain" id="PRO_0000303977" description="Putative uncharacterized protein C1A6.11">
    <location>
        <begin position="1"/>
        <end position="106"/>
    </location>
</feature>
<keyword id="KW-1185">Reference proteome</keyword>
<protein>
    <recommendedName>
        <fullName>Putative uncharacterized protein C1A6.11</fullName>
    </recommendedName>
</protein>
<proteinExistence type="predicted"/>
<accession>Q9C114</accession>
<organism>
    <name type="scientific">Schizosaccharomyces pombe (strain 972 / ATCC 24843)</name>
    <name type="common">Fission yeast</name>
    <dbReference type="NCBI Taxonomy" id="284812"/>
    <lineage>
        <taxon>Eukaryota</taxon>
        <taxon>Fungi</taxon>
        <taxon>Dikarya</taxon>
        <taxon>Ascomycota</taxon>
        <taxon>Taphrinomycotina</taxon>
        <taxon>Schizosaccharomycetes</taxon>
        <taxon>Schizosaccharomycetales</taxon>
        <taxon>Schizosaccharomycetaceae</taxon>
        <taxon>Schizosaccharomyces</taxon>
    </lineage>
</organism>
<reference key="1">
    <citation type="journal article" date="2002" name="Nature">
        <title>The genome sequence of Schizosaccharomyces pombe.</title>
        <authorList>
            <person name="Wood V."/>
            <person name="Gwilliam R."/>
            <person name="Rajandream M.A."/>
            <person name="Lyne M.H."/>
            <person name="Lyne R."/>
            <person name="Stewart A."/>
            <person name="Sgouros J.G."/>
            <person name="Peat N."/>
            <person name="Hayles J."/>
            <person name="Baker S.G."/>
            <person name="Basham D."/>
            <person name="Bowman S."/>
            <person name="Brooks K."/>
            <person name="Brown D."/>
            <person name="Brown S."/>
            <person name="Chillingworth T."/>
            <person name="Churcher C.M."/>
            <person name="Collins M."/>
            <person name="Connor R."/>
            <person name="Cronin A."/>
            <person name="Davis P."/>
            <person name="Feltwell T."/>
            <person name="Fraser A."/>
            <person name="Gentles S."/>
            <person name="Goble A."/>
            <person name="Hamlin N."/>
            <person name="Harris D.E."/>
            <person name="Hidalgo J."/>
            <person name="Hodgson G."/>
            <person name="Holroyd S."/>
            <person name="Hornsby T."/>
            <person name="Howarth S."/>
            <person name="Huckle E.J."/>
            <person name="Hunt S."/>
            <person name="Jagels K."/>
            <person name="James K.D."/>
            <person name="Jones L."/>
            <person name="Jones M."/>
            <person name="Leather S."/>
            <person name="McDonald S."/>
            <person name="McLean J."/>
            <person name="Mooney P."/>
            <person name="Moule S."/>
            <person name="Mungall K.L."/>
            <person name="Murphy L.D."/>
            <person name="Niblett D."/>
            <person name="Odell C."/>
            <person name="Oliver K."/>
            <person name="O'Neil S."/>
            <person name="Pearson D."/>
            <person name="Quail M.A."/>
            <person name="Rabbinowitsch E."/>
            <person name="Rutherford K.M."/>
            <person name="Rutter S."/>
            <person name="Saunders D."/>
            <person name="Seeger K."/>
            <person name="Sharp S."/>
            <person name="Skelton J."/>
            <person name="Simmonds M.N."/>
            <person name="Squares R."/>
            <person name="Squares S."/>
            <person name="Stevens K."/>
            <person name="Taylor K."/>
            <person name="Taylor R.G."/>
            <person name="Tivey A."/>
            <person name="Walsh S.V."/>
            <person name="Warren T."/>
            <person name="Whitehead S."/>
            <person name="Woodward J.R."/>
            <person name="Volckaert G."/>
            <person name="Aert R."/>
            <person name="Robben J."/>
            <person name="Grymonprez B."/>
            <person name="Weltjens I."/>
            <person name="Vanstreels E."/>
            <person name="Rieger M."/>
            <person name="Schaefer M."/>
            <person name="Mueller-Auer S."/>
            <person name="Gabel C."/>
            <person name="Fuchs M."/>
            <person name="Duesterhoeft A."/>
            <person name="Fritzc C."/>
            <person name="Holzer E."/>
            <person name="Moestl D."/>
            <person name="Hilbert H."/>
            <person name="Borzym K."/>
            <person name="Langer I."/>
            <person name="Beck A."/>
            <person name="Lehrach H."/>
            <person name="Reinhardt R."/>
            <person name="Pohl T.M."/>
            <person name="Eger P."/>
            <person name="Zimmermann W."/>
            <person name="Wedler H."/>
            <person name="Wambutt R."/>
            <person name="Purnelle B."/>
            <person name="Goffeau A."/>
            <person name="Cadieu E."/>
            <person name="Dreano S."/>
            <person name="Gloux S."/>
            <person name="Lelaure V."/>
            <person name="Mottier S."/>
            <person name="Galibert F."/>
            <person name="Aves S.J."/>
            <person name="Xiang Z."/>
            <person name="Hunt C."/>
            <person name="Moore K."/>
            <person name="Hurst S.M."/>
            <person name="Lucas M."/>
            <person name="Rochet M."/>
            <person name="Gaillardin C."/>
            <person name="Tallada V.A."/>
            <person name="Garzon A."/>
            <person name="Thode G."/>
            <person name="Daga R.R."/>
            <person name="Cruzado L."/>
            <person name="Jimenez J."/>
            <person name="Sanchez M."/>
            <person name="del Rey F."/>
            <person name="Benito J."/>
            <person name="Dominguez A."/>
            <person name="Revuelta J.L."/>
            <person name="Moreno S."/>
            <person name="Armstrong J."/>
            <person name="Forsburg S.L."/>
            <person name="Cerutti L."/>
            <person name="Lowe T."/>
            <person name="McCombie W.R."/>
            <person name="Paulsen I."/>
            <person name="Potashkin J."/>
            <person name="Shpakovski G.V."/>
            <person name="Ussery D."/>
            <person name="Barrell B.G."/>
            <person name="Nurse P."/>
        </authorList>
    </citation>
    <scope>NUCLEOTIDE SEQUENCE [LARGE SCALE GENOMIC DNA]</scope>
    <source>
        <strain>972 / ATCC 24843</strain>
    </source>
</reference>
<gene>
    <name type="ORF">SPAC1A6.11</name>
</gene>